<accession>B1X076</accession>
<keyword id="KW-0488">Methylation</keyword>
<keyword id="KW-1185">Reference proteome</keyword>
<keyword id="KW-0687">Ribonucleoprotein</keyword>
<keyword id="KW-0689">Ribosomal protein</keyword>
<keyword id="KW-0694">RNA-binding</keyword>
<keyword id="KW-0699">rRNA-binding</keyword>
<evidence type="ECO:0000255" key="1">
    <source>
        <dbReference type="HAMAP-Rule" id="MF_00736"/>
    </source>
</evidence>
<evidence type="ECO:0000305" key="2"/>
<organism>
    <name type="scientific">Crocosphaera subtropica (strain ATCC 51142 / BH68)</name>
    <name type="common">Cyanothece sp. (strain ATCC 51142)</name>
    <dbReference type="NCBI Taxonomy" id="43989"/>
    <lineage>
        <taxon>Bacteria</taxon>
        <taxon>Bacillati</taxon>
        <taxon>Cyanobacteriota</taxon>
        <taxon>Cyanophyceae</taxon>
        <taxon>Oscillatoriophycideae</taxon>
        <taxon>Chroococcales</taxon>
        <taxon>Aphanothecaceae</taxon>
        <taxon>Crocosphaera</taxon>
        <taxon>Crocosphaera subtropica</taxon>
    </lineage>
</organism>
<dbReference type="EMBL" id="CP000806">
    <property type="protein sequence ID" value="ACB49577.1"/>
    <property type="molecule type" value="Genomic_DNA"/>
</dbReference>
<dbReference type="RefSeq" id="WP_009546723.1">
    <property type="nucleotide sequence ID" value="NC_010546.1"/>
</dbReference>
<dbReference type="SMR" id="B1X076"/>
<dbReference type="STRING" id="43989.cce_0226"/>
<dbReference type="KEGG" id="cyt:cce_0226"/>
<dbReference type="eggNOG" id="COG0080">
    <property type="taxonomic scope" value="Bacteria"/>
</dbReference>
<dbReference type="HOGENOM" id="CLU_074237_2_2_3"/>
<dbReference type="OrthoDB" id="9802408at2"/>
<dbReference type="Proteomes" id="UP000001203">
    <property type="component" value="Chromosome circular"/>
</dbReference>
<dbReference type="GO" id="GO:0022625">
    <property type="term" value="C:cytosolic large ribosomal subunit"/>
    <property type="evidence" value="ECO:0007669"/>
    <property type="project" value="TreeGrafter"/>
</dbReference>
<dbReference type="GO" id="GO:0070180">
    <property type="term" value="F:large ribosomal subunit rRNA binding"/>
    <property type="evidence" value="ECO:0007669"/>
    <property type="project" value="UniProtKB-UniRule"/>
</dbReference>
<dbReference type="GO" id="GO:0003735">
    <property type="term" value="F:structural constituent of ribosome"/>
    <property type="evidence" value="ECO:0007669"/>
    <property type="project" value="InterPro"/>
</dbReference>
<dbReference type="GO" id="GO:0006412">
    <property type="term" value="P:translation"/>
    <property type="evidence" value="ECO:0007669"/>
    <property type="project" value="UniProtKB-UniRule"/>
</dbReference>
<dbReference type="CDD" id="cd00349">
    <property type="entry name" value="Ribosomal_L11"/>
    <property type="match status" value="1"/>
</dbReference>
<dbReference type="FunFam" id="1.10.10.250:FF:000001">
    <property type="entry name" value="50S ribosomal protein L11"/>
    <property type="match status" value="1"/>
</dbReference>
<dbReference type="FunFam" id="3.30.1550.10:FF:000001">
    <property type="entry name" value="50S ribosomal protein L11"/>
    <property type="match status" value="1"/>
</dbReference>
<dbReference type="Gene3D" id="1.10.10.250">
    <property type="entry name" value="Ribosomal protein L11, C-terminal domain"/>
    <property type="match status" value="1"/>
</dbReference>
<dbReference type="Gene3D" id="3.30.1550.10">
    <property type="entry name" value="Ribosomal protein L11/L12, N-terminal domain"/>
    <property type="match status" value="1"/>
</dbReference>
<dbReference type="HAMAP" id="MF_00736">
    <property type="entry name" value="Ribosomal_uL11"/>
    <property type="match status" value="1"/>
</dbReference>
<dbReference type="InterPro" id="IPR000911">
    <property type="entry name" value="Ribosomal_uL11"/>
</dbReference>
<dbReference type="InterPro" id="IPR006519">
    <property type="entry name" value="Ribosomal_uL11_bac-typ"/>
</dbReference>
<dbReference type="InterPro" id="IPR020783">
    <property type="entry name" value="Ribosomal_uL11_C"/>
</dbReference>
<dbReference type="InterPro" id="IPR036769">
    <property type="entry name" value="Ribosomal_uL11_C_sf"/>
</dbReference>
<dbReference type="InterPro" id="IPR020785">
    <property type="entry name" value="Ribosomal_uL11_CS"/>
</dbReference>
<dbReference type="InterPro" id="IPR020784">
    <property type="entry name" value="Ribosomal_uL11_N"/>
</dbReference>
<dbReference type="InterPro" id="IPR036796">
    <property type="entry name" value="Ribosomal_uL11_N_sf"/>
</dbReference>
<dbReference type="NCBIfam" id="TIGR01632">
    <property type="entry name" value="L11_bact"/>
    <property type="match status" value="1"/>
</dbReference>
<dbReference type="PANTHER" id="PTHR11661">
    <property type="entry name" value="60S RIBOSOMAL PROTEIN L12"/>
    <property type="match status" value="1"/>
</dbReference>
<dbReference type="PANTHER" id="PTHR11661:SF1">
    <property type="entry name" value="LARGE RIBOSOMAL SUBUNIT PROTEIN UL11M"/>
    <property type="match status" value="1"/>
</dbReference>
<dbReference type="Pfam" id="PF00298">
    <property type="entry name" value="Ribosomal_L11"/>
    <property type="match status" value="1"/>
</dbReference>
<dbReference type="Pfam" id="PF03946">
    <property type="entry name" value="Ribosomal_L11_N"/>
    <property type="match status" value="1"/>
</dbReference>
<dbReference type="SMART" id="SM00649">
    <property type="entry name" value="RL11"/>
    <property type="match status" value="1"/>
</dbReference>
<dbReference type="SUPFAM" id="SSF54747">
    <property type="entry name" value="Ribosomal L11/L12e N-terminal domain"/>
    <property type="match status" value="1"/>
</dbReference>
<dbReference type="SUPFAM" id="SSF46906">
    <property type="entry name" value="Ribosomal protein L11, C-terminal domain"/>
    <property type="match status" value="1"/>
</dbReference>
<dbReference type="PROSITE" id="PS00359">
    <property type="entry name" value="RIBOSOMAL_L11"/>
    <property type="match status" value="1"/>
</dbReference>
<name>RL11_CROS5</name>
<protein>
    <recommendedName>
        <fullName evidence="1">Large ribosomal subunit protein uL11</fullName>
    </recommendedName>
    <alternativeName>
        <fullName evidence="2">50S ribosomal protein L11</fullName>
    </alternativeName>
</protein>
<sequence length="141" mass="14898">MAKKVVALIKLALPAGKANPAPPVGPALGQHGVNIMAFCKEYNAKTSDQAGMVIPVEISVFEDRSFTFVLKTPPASVLIRKAAGIEKGSAQPNNQKVGSISRDQLKEIAQTKMPDLNANDIDAAMNIVEGTARNMGVTIND</sequence>
<reference key="1">
    <citation type="journal article" date="2008" name="Proc. Natl. Acad. Sci. U.S.A.">
        <title>The genome of Cyanothece 51142, a unicellular diazotrophic cyanobacterium important in the marine nitrogen cycle.</title>
        <authorList>
            <person name="Welsh E.A."/>
            <person name="Liberton M."/>
            <person name="Stoeckel J."/>
            <person name="Loh T."/>
            <person name="Elvitigala T."/>
            <person name="Wang C."/>
            <person name="Wollam A."/>
            <person name="Fulton R.S."/>
            <person name="Clifton S.W."/>
            <person name="Jacobs J.M."/>
            <person name="Aurora R."/>
            <person name="Ghosh B.K."/>
            <person name="Sherman L.A."/>
            <person name="Smith R.D."/>
            <person name="Wilson R.K."/>
            <person name="Pakrasi H.B."/>
        </authorList>
    </citation>
    <scope>NUCLEOTIDE SEQUENCE [LARGE SCALE GENOMIC DNA]</scope>
    <source>
        <strain>ATCC 51142 / BH68</strain>
    </source>
</reference>
<gene>
    <name evidence="1" type="primary">rplK</name>
    <name evidence="1" type="synonym">rpl11</name>
    <name type="ordered locus">cce_0226</name>
</gene>
<feature type="chain" id="PRO_1000195612" description="Large ribosomal subunit protein uL11">
    <location>
        <begin position="1"/>
        <end position="141"/>
    </location>
</feature>
<proteinExistence type="inferred from homology"/>
<comment type="function">
    <text evidence="1">Forms part of the ribosomal stalk which helps the ribosome interact with GTP-bound translation factors.</text>
</comment>
<comment type="subunit">
    <text evidence="1">Part of the ribosomal stalk of the 50S ribosomal subunit. Interacts with L10 and the large rRNA to form the base of the stalk. L10 forms an elongated spine to which L12 dimers bind in a sequential fashion forming a multimeric L10(L12)X complex.</text>
</comment>
<comment type="PTM">
    <text evidence="1">One or more lysine residues are methylated.</text>
</comment>
<comment type="similarity">
    <text evidence="1">Belongs to the universal ribosomal protein uL11 family.</text>
</comment>